<proteinExistence type="evidence at protein level"/>
<organism>
    <name type="scientific">Vigna unguiculata</name>
    <name type="common">Cowpea</name>
    <dbReference type="NCBI Taxonomy" id="3917"/>
    <lineage>
        <taxon>Eukaryota</taxon>
        <taxon>Viridiplantae</taxon>
        <taxon>Streptophyta</taxon>
        <taxon>Embryophyta</taxon>
        <taxon>Tracheophyta</taxon>
        <taxon>Spermatophyta</taxon>
        <taxon>Magnoliopsida</taxon>
        <taxon>eudicotyledons</taxon>
        <taxon>Gunneridae</taxon>
        <taxon>Pentapetalae</taxon>
        <taxon>rosids</taxon>
        <taxon>fabids</taxon>
        <taxon>Fabales</taxon>
        <taxon>Fabaceae</taxon>
        <taxon>Papilionoideae</taxon>
        <taxon>50 kb inversion clade</taxon>
        <taxon>NPAAA clade</taxon>
        <taxon>indigoferoid/millettioid clade</taxon>
        <taxon>Phaseoleae</taxon>
        <taxon>Vigna</taxon>
    </lineage>
</organism>
<feature type="initiator methionine" description="Removed" evidence="5">
    <location>
        <position position="1"/>
    </location>
</feature>
<feature type="chain" id="PRO_0000193010" description="Leghemoglobin-2">
    <location>
        <begin position="2"/>
        <end position="145"/>
    </location>
</feature>
<feature type="domain" description="Globin" evidence="4">
    <location>
        <begin position="3"/>
        <end position="145"/>
    </location>
</feature>
<feature type="binding site" evidence="2">
    <location>
        <position position="46"/>
    </location>
    <ligand>
        <name>heme b</name>
        <dbReference type="ChEBI" id="CHEBI:60344"/>
    </ligand>
</feature>
<feature type="binding site" evidence="2">
    <location>
        <position position="62"/>
    </location>
    <ligand>
        <name>O2</name>
        <dbReference type="ChEBI" id="CHEBI:15379"/>
    </ligand>
</feature>
<feature type="binding site" evidence="2">
    <location>
        <position position="65"/>
    </location>
    <ligand>
        <name>heme b</name>
        <dbReference type="ChEBI" id="CHEBI:60344"/>
    </ligand>
</feature>
<feature type="binding site" description="proximal binding residue" evidence="4">
    <location>
        <position position="93"/>
    </location>
    <ligand>
        <name>heme b</name>
        <dbReference type="ChEBI" id="CHEBI:60344"/>
    </ligand>
    <ligandPart>
        <name>Fe</name>
        <dbReference type="ChEBI" id="CHEBI:18248"/>
    </ligandPart>
</feature>
<feature type="binding site" evidence="2">
    <location>
        <position position="96"/>
    </location>
    <ligand>
        <name>heme b</name>
        <dbReference type="ChEBI" id="CHEBI:60344"/>
    </ligand>
</feature>
<feature type="modified residue" description="Nitrated tyrosine" evidence="1">
    <location>
        <position position="26"/>
    </location>
</feature>
<feature type="modified residue" description="Nitrated tyrosine" evidence="1">
    <location>
        <position position="31"/>
    </location>
</feature>
<feature type="modified residue" description="Phosphoserine" evidence="3">
    <location>
        <position position="46"/>
    </location>
</feature>
<feature type="modified residue" description="Nitrated tyrosine" evidence="1">
    <location>
        <position position="134"/>
    </location>
</feature>
<evidence type="ECO:0000250" key="1">
    <source>
        <dbReference type="UniProtKB" id="P02234"/>
    </source>
</evidence>
<evidence type="ECO:0000250" key="2">
    <source>
        <dbReference type="UniProtKB" id="P02240"/>
    </source>
</evidence>
<evidence type="ECO:0000250" key="3">
    <source>
        <dbReference type="UniProtKB" id="Q3C1F7"/>
    </source>
</evidence>
<evidence type="ECO:0000255" key="4">
    <source>
        <dbReference type="PROSITE-ProRule" id="PRU00238"/>
    </source>
</evidence>
<evidence type="ECO:0000269" key="5">
    <source>
    </source>
</evidence>
<evidence type="ECO:0000303" key="6">
    <source>
    </source>
</evidence>
<evidence type="ECO:0000303" key="7">
    <source>
    </source>
</evidence>
<evidence type="ECO:0000305" key="8"/>
<dbReference type="EMBL" id="U33207">
    <property type="protein sequence ID" value="AAB65769.1"/>
    <property type="molecule type" value="Genomic_DNA"/>
</dbReference>
<dbReference type="EMBL" id="U33205">
    <property type="protein sequence ID" value="AAB65768.1"/>
    <property type="molecule type" value="mRNA"/>
</dbReference>
<dbReference type="PIR" id="T11533">
    <property type="entry name" value="T11533"/>
</dbReference>
<dbReference type="RefSeq" id="NP_001363033.1">
    <property type="nucleotide sequence ID" value="NM_001376104.1"/>
</dbReference>
<dbReference type="SMR" id="Q43296"/>
<dbReference type="EnsemblPlants" id="Vigun07g190700.1.v1.2">
    <property type="protein sequence ID" value="Vigun07g190700.1.v1.2"/>
    <property type="gene ID" value="Vigun07g190700.v1.2"/>
</dbReference>
<dbReference type="EnsemblPlants" id="Vigun07g191000.1.v1.2">
    <property type="protein sequence ID" value="Vigun07g191000.1.v1.2"/>
    <property type="gene ID" value="Vigun07g191000.v1.2"/>
</dbReference>
<dbReference type="GeneID" id="114192486"/>
<dbReference type="Gramene" id="Vigun07g190700.1.v1.2">
    <property type="protein sequence ID" value="Vigun07g190700.1.v1.2"/>
    <property type="gene ID" value="Vigun07g190700.v1.2"/>
</dbReference>
<dbReference type="Gramene" id="Vigun07g191000.1.v1.2">
    <property type="protein sequence ID" value="Vigun07g191000.1.v1.2"/>
    <property type="gene ID" value="Vigun07g191000.v1.2"/>
</dbReference>
<dbReference type="OrthoDB" id="2012505at2759"/>
<dbReference type="GO" id="GO:0005829">
    <property type="term" value="C:cytosol"/>
    <property type="evidence" value="ECO:0007669"/>
    <property type="project" value="UniProtKB-SubCell"/>
</dbReference>
<dbReference type="GO" id="GO:0005634">
    <property type="term" value="C:nucleus"/>
    <property type="evidence" value="ECO:0007669"/>
    <property type="project" value="UniProtKB-SubCell"/>
</dbReference>
<dbReference type="GO" id="GO:0020037">
    <property type="term" value="F:heme binding"/>
    <property type="evidence" value="ECO:0007669"/>
    <property type="project" value="InterPro"/>
</dbReference>
<dbReference type="GO" id="GO:0046872">
    <property type="term" value="F:metal ion binding"/>
    <property type="evidence" value="ECO:0007669"/>
    <property type="project" value="UniProtKB-KW"/>
</dbReference>
<dbReference type="GO" id="GO:0019825">
    <property type="term" value="F:oxygen binding"/>
    <property type="evidence" value="ECO:0007669"/>
    <property type="project" value="InterPro"/>
</dbReference>
<dbReference type="GO" id="GO:0005344">
    <property type="term" value="F:oxygen carrier activity"/>
    <property type="evidence" value="ECO:0007669"/>
    <property type="project" value="UniProtKB-KW"/>
</dbReference>
<dbReference type="GO" id="GO:0009877">
    <property type="term" value="P:nodulation"/>
    <property type="evidence" value="ECO:0007669"/>
    <property type="project" value="UniProtKB-KW"/>
</dbReference>
<dbReference type="Gene3D" id="1.10.490.10">
    <property type="entry name" value="Globins"/>
    <property type="match status" value="1"/>
</dbReference>
<dbReference type="InterPro" id="IPR000971">
    <property type="entry name" value="Globin"/>
</dbReference>
<dbReference type="InterPro" id="IPR009050">
    <property type="entry name" value="Globin-like_sf"/>
</dbReference>
<dbReference type="InterPro" id="IPR012292">
    <property type="entry name" value="Globin/Proto"/>
</dbReference>
<dbReference type="InterPro" id="IPR001032">
    <property type="entry name" value="Leghaemoglobin-like"/>
</dbReference>
<dbReference type="InterPro" id="IPR019824">
    <property type="entry name" value="Leghaemoglobin_Fe_BS"/>
</dbReference>
<dbReference type="PANTHER" id="PTHR22924">
    <property type="entry name" value="LEGHEMOGLOBIN-RELATED"/>
    <property type="match status" value="1"/>
</dbReference>
<dbReference type="PANTHER" id="PTHR22924:SF92">
    <property type="entry name" value="NON-SYMBIOTIC HEMOGLOBIN 2"/>
    <property type="match status" value="1"/>
</dbReference>
<dbReference type="Pfam" id="PF00042">
    <property type="entry name" value="Globin"/>
    <property type="match status" value="1"/>
</dbReference>
<dbReference type="PRINTS" id="PR00188">
    <property type="entry name" value="PLANTGLOBIN"/>
</dbReference>
<dbReference type="SUPFAM" id="SSF46458">
    <property type="entry name" value="Globin-like"/>
    <property type="match status" value="1"/>
</dbReference>
<dbReference type="PROSITE" id="PS01033">
    <property type="entry name" value="GLOBIN"/>
    <property type="match status" value="1"/>
</dbReference>
<dbReference type="PROSITE" id="PS00208">
    <property type="entry name" value="PLANT_GLOBIN"/>
    <property type="match status" value="1"/>
</dbReference>
<protein>
    <recommendedName>
        <fullName evidence="7">Leghemoglobin-2</fullName>
    </recommendedName>
    <alternativeName>
        <fullName evidence="7">Leghemoglobin II</fullName>
        <shortName evidence="7">LbII</shortName>
    </alternativeName>
</protein>
<comment type="function">
    <text evidence="5 6">Leghemoglobin that reversibly binds oxygen O(2) through a pentacoordinated heme iron (PubMed:9193085). In root nodules, facilitates the diffusion of oxygen to the bacteroids while preventing the bacterial nitrogenase from being inactivated by buffering dioxygen, nitric oxide and carbon monoxide, and promoting the formation of reactive oxygen species (ROS, e.g. H(2)O(2)) (PubMed:17540516, PubMed:9193085). This role is essential for symbiotic nitrogen fixation (SNF) (PubMed:17540516, PubMed:9193085).</text>
</comment>
<comment type="subunit">
    <text evidence="2">Monomer.</text>
</comment>
<comment type="subcellular location">
    <subcellularLocation>
        <location evidence="2">Cytoplasm</location>
        <location evidence="2">Cytosol</location>
    </subcellularLocation>
    <subcellularLocation>
        <location evidence="2">Nucleus</location>
    </subcellularLocation>
</comment>
<comment type="tissue specificity">
    <text evidence="5">Root nodules.</text>
</comment>
<comment type="PTM">
    <text evidence="1">Nitrated in effective nodules and particularly in hypoxic conditions; this mechanism may play a protective role in the symbiosis by buffering toxic peroxynitrite NO(2)(-). Nitration level decrease during nodule senescence.</text>
</comment>
<comment type="PTM">
    <text evidence="3">Phosphorylation at Ser-46 disrupts the molecular environment of its porphyrin ring oxygen binding pocket, thus leading to a reduced oxygen consumption and to the delivery of oxygen O(2) to symbiosomes.</text>
</comment>
<comment type="similarity">
    <text evidence="8">Belongs to the plant globin family.</text>
</comment>
<sequence>MVAFSDKQEGLVNGAYEAFKADIPKYSVVFYTTILEKAPAAKNLFSFLANGVDATNPKLTGHAEKLFGLVRDSAAQLRASGGVVADAALGAVHSQKAVNDAQFVVVKEALVKTLKEAVGDKWSDELGTAVELAYDELAAAIKKAY</sequence>
<keyword id="KW-0963">Cytoplasm</keyword>
<keyword id="KW-0903">Direct protein sequencing</keyword>
<keyword id="KW-0349">Heme</keyword>
<keyword id="KW-0408">Iron</keyword>
<keyword id="KW-0479">Metal-binding</keyword>
<keyword id="KW-0944">Nitration</keyword>
<keyword id="KW-0535">Nitrogen fixation</keyword>
<keyword id="KW-0536">Nodulation</keyword>
<keyword id="KW-0539">Nucleus</keyword>
<keyword id="KW-0561">Oxygen transport</keyword>
<keyword id="KW-0597">Phosphoprotein</keyword>
<keyword id="KW-0813">Transport</keyword>
<gene>
    <name evidence="7" type="primary">LBII</name>
</gene>
<reference key="1">
    <citation type="journal article" date="1997" name="Plant Physiol.">
        <title>Molecular cloning of the cowpea leghemoglobin II gene and expression of its cDNA in Escherichia coli. Purification and characterization of the recombinant protein.</title>
        <authorList>
            <person name="Arredondo-Peter R."/>
            <person name="Moran J.F."/>
            <person name="Sarath G."/>
            <person name="Luan P."/>
            <person name="Klucas R.V."/>
        </authorList>
    </citation>
    <scope>NUCLEOTIDE SEQUENCE [GENOMIC DNA / MRNA]</scope>
    <scope>PROTEIN SEQUENCE OF 2-11</scope>
    <scope>CHARACTERIZATION</scope>
    <scope>FUNCTION</scope>
    <scope>TISSUE SPECIFICITY</scope>
    <source>
        <strain>cv. California no. 5</strain>
        <tissue>Root nodule</tissue>
    </source>
</reference>
<reference key="2">
    <citation type="journal article" date="2007" name="Gene">
        <title>Plant hemoglobins: what we know six decades after their discovery.</title>
        <authorList>
            <person name="Garrocho-Villegas V."/>
            <person name="Gopalasubramaniam S.K."/>
            <person name="Arredondo-Peter R."/>
        </authorList>
    </citation>
    <scope>REVIEW ON PHYTOGLOBINS</scope>
</reference>
<accession>Q43296</accession>
<name>LGB2_VIGUN</name>